<feature type="chain" id="PRO_0000109409" description="Pyridoxal 5'-phosphate synthase subunit PdxS">
    <location>
        <begin position="1"/>
        <end position="295"/>
    </location>
</feature>
<feature type="active site" description="Schiff-base intermediate with D-ribose 5-phosphate" evidence="1">
    <location>
        <position position="82"/>
    </location>
</feature>
<feature type="binding site" evidence="1">
    <location>
        <position position="25"/>
    </location>
    <ligand>
        <name>D-ribose 5-phosphate</name>
        <dbReference type="ChEBI" id="CHEBI:78346"/>
    </ligand>
</feature>
<feature type="binding site" evidence="1">
    <location>
        <position position="154"/>
    </location>
    <ligand>
        <name>D-ribose 5-phosphate</name>
        <dbReference type="ChEBI" id="CHEBI:78346"/>
    </ligand>
</feature>
<feature type="binding site" evidence="1">
    <location>
        <position position="166"/>
    </location>
    <ligand>
        <name>D-glyceraldehyde 3-phosphate</name>
        <dbReference type="ChEBI" id="CHEBI:59776"/>
    </ligand>
</feature>
<feature type="binding site" evidence="1">
    <location>
        <position position="215"/>
    </location>
    <ligand>
        <name>D-ribose 5-phosphate</name>
        <dbReference type="ChEBI" id="CHEBI:78346"/>
    </ligand>
</feature>
<feature type="binding site" evidence="1">
    <location>
        <begin position="236"/>
        <end position="237"/>
    </location>
    <ligand>
        <name>D-ribose 5-phosphate</name>
        <dbReference type="ChEBI" id="CHEBI:78346"/>
    </ligand>
</feature>
<accession>Q9CLJ6</accession>
<keyword id="KW-0456">Lyase</keyword>
<keyword id="KW-0663">Pyridoxal phosphate</keyword>
<keyword id="KW-1185">Reference proteome</keyword>
<keyword id="KW-0704">Schiff base</keyword>
<proteinExistence type="inferred from homology"/>
<sequence>MNTILGSDTVKRGMAQMQKGGVIMDVVNAEQARIAEAAGAVAVMALERVPSDIRAAGGVARMANPKIVKEVMNAVSIPVMAKARIGHITEARVLEAMGVDYIDESEVLTPADDEFHLLKCEFTVPFVCGCRDLGEALRRIGEGASMLRTKGEPGTGNIVEAVRHIRKVNAQIRKVVAMNHDELMTEAKNLSAPFELLLQIKALGKLPVVNFAAGGVATPADAALMMELGADGVFVGSGIFKSEHPEKFAKAIVQATTHYQDYDLIARLSEELGEPMKGIEISRLQQHERMQERGW</sequence>
<comment type="function">
    <text evidence="1">Catalyzes the formation of pyridoxal 5'-phosphate from ribose 5-phosphate (RBP), glyceraldehyde 3-phosphate (G3P) and ammonia. The ammonia is provided by the PdxT subunit. Can also use ribulose 5-phosphate and dihydroxyacetone phosphate as substrates, resulting from enzyme-catalyzed isomerization of RBP and G3P, respectively.</text>
</comment>
<comment type="catalytic activity">
    <reaction evidence="1">
        <text>aldehydo-D-ribose 5-phosphate + D-glyceraldehyde 3-phosphate + L-glutamine = pyridoxal 5'-phosphate + L-glutamate + phosphate + 3 H2O + H(+)</text>
        <dbReference type="Rhea" id="RHEA:31507"/>
        <dbReference type="ChEBI" id="CHEBI:15377"/>
        <dbReference type="ChEBI" id="CHEBI:15378"/>
        <dbReference type="ChEBI" id="CHEBI:29985"/>
        <dbReference type="ChEBI" id="CHEBI:43474"/>
        <dbReference type="ChEBI" id="CHEBI:58273"/>
        <dbReference type="ChEBI" id="CHEBI:58359"/>
        <dbReference type="ChEBI" id="CHEBI:59776"/>
        <dbReference type="ChEBI" id="CHEBI:597326"/>
        <dbReference type="EC" id="4.3.3.6"/>
    </reaction>
</comment>
<comment type="pathway">
    <text evidence="1">Cofactor biosynthesis; pyridoxal 5'-phosphate biosynthesis.</text>
</comment>
<comment type="subunit">
    <text evidence="1">In the presence of PdxT, forms a dodecamer of heterodimers.</text>
</comment>
<comment type="similarity">
    <text evidence="1">Belongs to the PdxS/SNZ family.</text>
</comment>
<name>PDXS_PASMU</name>
<reference key="1">
    <citation type="journal article" date="2001" name="Proc. Natl. Acad. Sci. U.S.A.">
        <title>Complete genomic sequence of Pasteurella multocida Pm70.</title>
        <authorList>
            <person name="May B.J."/>
            <person name="Zhang Q."/>
            <person name="Li L.L."/>
            <person name="Paustian M.L."/>
            <person name="Whittam T.S."/>
            <person name="Kapur V."/>
        </authorList>
    </citation>
    <scope>NUCLEOTIDE SEQUENCE [LARGE SCALE GENOMIC DNA]</scope>
    <source>
        <strain>Pm70</strain>
    </source>
</reference>
<gene>
    <name evidence="1" type="primary">pdxS</name>
    <name type="ordered locus">PM1232</name>
</gene>
<evidence type="ECO:0000255" key="1">
    <source>
        <dbReference type="HAMAP-Rule" id="MF_01824"/>
    </source>
</evidence>
<protein>
    <recommendedName>
        <fullName evidence="1">Pyridoxal 5'-phosphate synthase subunit PdxS</fullName>
        <shortName evidence="1">PLP synthase subunit PdxS</shortName>
        <ecNumber evidence="1">4.3.3.6</ecNumber>
    </recommendedName>
    <alternativeName>
        <fullName evidence="1">Pdx1</fullName>
    </alternativeName>
</protein>
<organism>
    <name type="scientific">Pasteurella multocida (strain Pm70)</name>
    <dbReference type="NCBI Taxonomy" id="272843"/>
    <lineage>
        <taxon>Bacteria</taxon>
        <taxon>Pseudomonadati</taxon>
        <taxon>Pseudomonadota</taxon>
        <taxon>Gammaproteobacteria</taxon>
        <taxon>Pasteurellales</taxon>
        <taxon>Pasteurellaceae</taxon>
        <taxon>Pasteurella</taxon>
    </lineage>
</organism>
<dbReference type="EC" id="4.3.3.6" evidence="1"/>
<dbReference type="EMBL" id="AE004439">
    <property type="protein sequence ID" value="AAK03316.1"/>
    <property type="molecule type" value="Genomic_DNA"/>
</dbReference>
<dbReference type="RefSeq" id="WP_010907086.1">
    <property type="nucleotide sequence ID" value="NC_002663.1"/>
</dbReference>
<dbReference type="SMR" id="Q9CLJ6"/>
<dbReference type="STRING" id="272843.PM1232"/>
<dbReference type="EnsemblBacteria" id="AAK03316">
    <property type="protein sequence ID" value="AAK03316"/>
    <property type="gene ID" value="PM1232"/>
</dbReference>
<dbReference type="KEGG" id="pmu:PM1232"/>
<dbReference type="PATRIC" id="fig|272843.6.peg.1242"/>
<dbReference type="HOGENOM" id="CLU_055352_1_0_6"/>
<dbReference type="OrthoDB" id="9772545at2"/>
<dbReference type="UniPathway" id="UPA00245"/>
<dbReference type="Proteomes" id="UP000000809">
    <property type="component" value="Chromosome"/>
</dbReference>
<dbReference type="GO" id="GO:0036381">
    <property type="term" value="F:pyridoxal 5'-phosphate synthase (glutamine hydrolysing) activity"/>
    <property type="evidence" value="ECO:0007669"/>
    <property type="project" value="UniProtKB-UniRule"/>
</dbReference>
<dbReference type="GO" id="GO:0006520">
    <property type="term" value="P:amino acid metabolic process"/>
    <property type="evidence" value="ECO:0007669"/>
    <property type="project" value="TreeGrafter"/>
</dbReference>
<dbReference type="GO" id="GO:0042823">
    <property type="term" value="P:pyridoxal phosphate biosynthetic process"/>
    <property type="evidence" value="ECO:0007669"/>
    <property type="project" value="UniProtKB-UniRule"/>
</dbReference>
<dbReference type="GO" id="GO:0008615">
    <property type="term" value="P:pyridoxine biosynthetic process"/>
    <property type="evidence" value="ECO:0007669"/>
    <property type="project" value="TreeGrafter"/>
</dbReference>
<dbReference type="CDD" id="cd04727">
    <property type="entry name" value="pdxS"/>
    <property type="match status" value="1"/>
</dbReference>
<dbReference type="FunFam" id="3.20.20.70:FF:000001">
    <property type="entry name" value="Pyridoxine biosynthesis protein PDX1"/>
    <property type="match status" value="1"/>
</dbReference>
<dbReference type="Gene3D" id="3.20.20.70">
    <property type="entry name" value="Aldolase class I"/>
    <property type="match status" value="1"/>
</dbReference>
<dbReference type="HAMAP" id="MF_01824">
    <property type="entry name" value="PdxS"/>
    <property type="match status" value="1"/>
</dbReference>
<dbReference type="InterPro" id="IPR013785">
    <property type="entry name" value="Aldolase_TIM"/>
</dbReference>
<dbReference type="InterPro" id="IPR001852">
    <property type="entry name" value="PdxS/SNZ"/>
</dbReference>
<dbReference type="InterPro" id="IPR033755">
    <property type="entry name" value="PdxS/SNZ_N"/>
</dbReference>
<dbReference type="InterPro" id="IPR011060">
    <property type="entry name" value="RibuloseP-bd_barrel"/>
</dbReference>
<dbReference type="NCBIfam" id="NF003215">
    <property type="entry name" value="PRK04180.1"/>
    <property type="match status" value="1"/>
</dbReference>
<dbReference type="NCBIfam" id="TIGR00343">
    <property type="entry name" value="pyridoxal 5'-phosphate synthase lyase subunit PdxS"/>
    <property type="match status" value="1"/>
</dbReference>
<dbReference type="PANTHER" id="PTHR31829">
    <property type="entry name" value="PYRIDOXAL 5'-PHOSPHATE SYNTHASE SUBUNIT SNZ1-RELATED"/>
    <property type="match status" value="1"/>
</dbReference>
<dbReference type="PANTHER" id="PTHR31829:SF0">
    <property type="entry name" value="PYRIDOXAL 5'-PHOSPHATE SYNTHASE SUBUNIT SNZ1-RELATED"/>
    <property type="match status" value="1"/>
</dbReference>
<dbReference type="Pfam" id="PF01680">
    <property type="entry name" value="SOR_SNZ"/>
    <property type="match status" value="1"/>
</dbReference>
<dbReference type="PIRSF" id="PIRSF029271">
    <property type="entry name" value="Pdx1"/>
    <property type="match status" value="1"/>
</dbReference>
<dbReference type="SUPFAM" id="SSF51366">
    <property type="entry name" value="Ribulose-phoshate binding barrel"/>
    <property type="match status" value="1"/>
</dbReference>
<dbReference type="PROSITE" id="PS01235">
    <property type="entry name" value="PDXS_SNZ_1"/>
    <property type="match status" value="1"/>
</dbReference>
<dbReference type="PROSITE" id="PS51129">
    <property type="entry name" value="PDXS_SNZ_2"/>
    <property type="match status" value="1"/>
</dbReference>